<name>PAND_ECO57</name>
<protein>
    <recommendedName>
        <fullName evidence="1">Aspartate 1-decarboxylase</fullName>
        <ecNumber evidence="1">4.1.1.11</ecNumber>
    </recommendedName>
    <alternativeName>
        <fullName evidence="1">Aspartate alpha-decarboxylase</fullName>
    </alternativeName>
    <component>
        <recommendedName>
            <fullName evidence="1">Aspartate 1-decarboxylase beta chain</fullName>
        </recommendedName>
    </component>
    <component>
        <recommendedName>
            <fullName evidence="1">Aspartate 1-decarboxylase alpha chain</fullName>
        </recommendedName>
    </component>
</protein>
<proteinExistence type="inferred from homology"/>
<dbReference type="EC" id="4.1.1.11" evidence="1"/>
<dbReference type="EMBL" id="AE005174">
    <property type="protein sequence ID" value="AAG54435.1"/>
    <property type="molecule type" value="Genomic_DNA"/>
</dbReference>
<dbReference type="EMBL" id="BA000007">
    <property type="protein sequence ID" value="BAB33558.1"/>
    <property type="molecule type" value="Genomic_DNA"/>
</dbReference>
<dbReference type="PIR" id="G85496">
    <property type="entry name" value="G85496"/>
</dbReference>
<dbReference type="PIR" id="G90645">
    <property type="entry name" value="G90645"/>
</dbReference>
<dbReference type="RefSeq" id="NP_308162.1">
    <property type="nucleotide sequence ID" value="NC_002695.1"/>
</dbReference>
<dbReference type="RefSeq" id="WP_000621515.1">
    <property type="nucleotide sequence ID" value="NZ_VOAI01000002.1"/>
</dbReference>
<dbReference type="SMR" id="P0A792"/>
<dbReference type="STRING" id="155864.Z0142"/>
<dbReference type="GeneID" id="913727"/>
<dbReference type="GeneID" id="93777305"/>
<dbReference type="KEGG" id="ece:Z0142"/>
<dbReference type="KEGG" id="ecs:ECs_0135"/>
<dbReference type="PATRIC" id="fig|386585.9.peg.234"/>
<dbReference type="eggNOG" id="COG0853">
    <property type="taxonomic scope" value="Bacteria"/>
</dbReference>
<dbReference type="HOGENOM" id="CLU_115305_2_1_6"/>
<dbReference type="OMA" id="MLYSKIH"/>
<dbReference type="UniPathway" id="UPA00028">
    <property type="reaction ID" value="UER00002"/>
</dbReference>
<dbReference type="Proteomes" id="UP000000558">
    <property type="component" value="Chromosome"/>
</dbReference>
<dbReference type="Proteomes" id="UP000002519">
    <property type="component" value="Chromosome"/>
</dbReference>
<dbReference type="GO" id="GO:0005829">
    <property type="term" value="C:cytosol"/>
    <property type="evidence" value="ECO:0007669"/>
    <property type="project" value="TreeGrafter"/>
</dbReference>
<dbReference type="GO" id="GO:0004068">
    <property type="term" value="F:aspartate 1-decarboxylase activity"/>
    <property type="evidence" value="ECO:0007669"/>
    <property type="project" value="UniProtKB-UniRule"/>
</dbReference>
<dbReference type="GO" id="GO:0006523">
    <property type="term" value="P:alanine biosynthetic process"/>
    <property type="evidence" value="ECO:0007669"/>
    <property type="project" value="InterPro"/>
</dbReference>
<dbReference type="GO" id="GO:0015940">
    <property type="term" value="P:pantothenate biosynthetic process"/>
    <property type="evidence" value="ECO:0007669"/>
    <property type="project" value="UniProtKB-UniRule"/>
</dbReference>
<dbReference type="CDD" id="cd06919">
    <property type="entry name" value="Asp_decarbox"/>
    <property type="match status" value="1"/>
</dbReference>
<dbReference type="FunFam" id="2.40.40.20:FF:000004">
    <property type="entry name" value="Aspartate 1-decarboxylase"/>
    <property type="match status" value="1"/>
</dbReference>
<dbReference type="Gene3D" id="2.40.40.20">
    <property type="match status" value="1"/>
</dbReference>
<dbReference type="HAMAP" id="MF_00446">
    <property type="entry name" value="PanD"/>
    <property type="match status" value="1"/>
</dbReference>
<dbReference type="InterPro" id="IPR009010">
    <property type="entry name" value="Asp_de-COase-like_dom_sf"/>
</dbReference>
<dbReference type="InterPro" id="IPR003190">
    <property type="entry name" value="Asp_decarbox"/>
</dbReference>
<dbReference type="NCBIfam" id="TIGR00223">
    <property type="entry name" value="panD"/>
    <property type="match status" value="1"/>
</dbReference>
<dbReference type="PANTHER" id="PTHR21012">
    <property type="entry name" value="ASPARTATE 1-DECARBOXYLASE"/>
    <property type="match status" value="1"/>
</dbReference>
<dbReference type="PANTHER" id="PTHR21012:SF0">
    <property type="entry name" value="ASPARTATE 1-DECARBOXYLASE"/>
    <property type="match status" value="1"/>
</dbReference>
<dbReference type="Pfam" id="PF02261">
    <property type="entry name" value="Asp_decarbox"/>
    <property type="match status" value="1"/>
</dbReference>
<dbReference type="PIRSF" id="PIRSF006246">
    <property type="entry name" value="Asp_decarbox"/>
    <property type="match status" value="1"/>
</dbReference>
<dbReference type="SUPFAM" id="SSF50692">
    <property type="entry name" value="ADC-like"/>
    <property type="match status" value="1"/>
</dbReference>
<sequence>MIRTMLQGKLHRVKVTHADLHYEGSCAIDQDFLDAAGILENEAIDIWNVTNGKRFSTYAIAAERGSRIISVNGAAAHCASVGDIVIIASFVTMPDEEARTWRPNVAYFEGDNEMKRTAKAIPVQVA</sequence>
<keyword id="KW-0068">Autocatalytic cleavage</keyword>
<keyword id="KW-0963">Cytoplasm</keyword>
<keyword id="KW-0210">Decarboxylase</keyword>
<keyword id="KW-0456">Lyase</keyword>
<keyword id="KW-0566">Pantothenate biosynthesis</keyword>
<keyword id="KW-0670">Pyruvate</keyword>
<keyword id="KW-1185">Reference proteome</keyword>
<keyword id="KW-0704">Schiff base</keyword>
<keyword id="KW-0865">Zymogen</keyword>
<feature type="chain" id="PRO_0000023075" description="Aspartate 1-decarboxylase beta chain" evidence="1">
    <location>
        <begin position="1"/>
        <end position="24"/>
    </location>
</feature>
<feature type="chain" id="PRO_0000023076" description="Aspartate 1-decarboxylase alpha chain" evidence="1">
    <location>
        <begin position="25"/>
        <end position="126"/>
    </location>
</feature>
<feature type="active site" description="Schiff-base intermediate with substrate; via pyruvic acid" evidence="1">
    <location>
        <position position="25"/>
    </location>
</feature>
<feature type="active site" description="Proton donor" evidence="1">
    <location>
        <position position="58"/>
    </location>
</feature>
<feature type="binding site" evidence="1">
    <location>
        <position position="57"/>
    </location>
    <ligand>
        <name>substrate</name>
    </ligand>
</feature>
<feature type="binding site" evidence="1">
    <location>
        <begin position="73"/>
        <end position="75"/>
    </location>
    <ligand>
        <name>substrate</name>
    </ligand>
</feature>
<feature type="modified residue" description="Pyruvic acid (Ser)" evidence="1">
    <location>
        <position position="25"/>
    </location>
</feature>
<organism>
    <name type="scientific">Escherichia coli O157:H7</name>
    <dbReference type="NCBI Taxonomy" id="83334"/>
    <lineage>
        <taxon>Bacteria</taxon>
        <taxon>Pseudomonadati</taxon>
        <taxon>Pseudomonadota</taxon>
        <taxon>Gammaproteobacteria</taxon>
        <taxon>Enterobacterales</taxon>
        <taxon>Enterobacteriaceae</taxon>
        <taxon>Escherichia</taxon>
    </lineage>
</organism>
<evidence type="ECO:0000255" key="1">
    <source>
        <dbReference type="HAMAP-Rule" id="MF_00446"/>
    </source>
</evidence>
<gene>
    <name evidence="1" type="primary">panD</name>
    <name type="ordered locus">Z0142</name>
    <name type="ordered locus">ECs0135</name>
</gene>
<comment type="function">
    <text evidence="1">Catalyzes the pyruvoyl-dependent decarboxylation of aspartate to produce beta-alanine.</text>
</comment>
<comment type="catalytic activity">
    <reaction evidence="1">
        <text>L-aspartate + H(+) = beta-alanine + CO2</text>
        <dbReference type="Rhea" id="RHEA:19497"/>
        <dbReference type="ChEBI" id="CHEBI:15378"/>
        <dbReference type="ChEBI" id="CHEBI:16526"/>
        <dbReference type="ChEBI" id="CHEBI:29991"/>
        <dbReference type="ChEBI" id="CHEBI:57966"/>
        <dbReference type="EC" id="4.1.1.11"/>
    </reaction>
</comment>
<comment type="cofactor">
    <cofactor evidence="1">
        <name>pyruvate</name>
        <dbReference type="ChEBI" id="CHEBI:15361"/>
    </cofactor>
    <text evidence="1">Binds 1 pyruvoyl group covalently per subunit.</text>
</comment>
<comment type="pathway">
    <text evidence="1">Cofactor biosynthesis; (R)-pantothenate biosynthesis; beta-alanine from L-aspartate: step 1/1.</text>
</comment>
<comment type="subunit">
    <text evidence="1">Heterooctamer of four alpha and four beta subunits.</text>
</comment>
<comment type="subcellular location">
    <subcellularLocation>
        <location evidence="1">Cytoplasm</location>
    </subcellularLocation>
</comment>
<comment type="PTM">
    <text evidence="1">Is synthesized initially as an inactive proenzyme, which is activated by self-cleavage at a specific serine bond to produce a beta-subunit with a hydroxyl group at its C-terminus and an alpha-subunit with a pyruvoyl group at its N-terminus.</text>
</comment>
<comment type="similarity">
    <text evidence="1">Belongs to the PanD family.</text>
</comment>
<reference key="1">
    <citation type="journal article" date="2001" name="Nature">
        <title>Genome sequence of enterohaemorrhagic Escherichia coli O157:H7.</title>
        <authorList>
            <person name="Perna N.T."/>
            <person name="Plunkett G. III"/>
            <person name="Burland V."/>
            <person name="Mau B."/>
            <person name="Glasner J.D."/>
            <person name="Rose D.J."/>
            <person name="Mayhew G.F."/>
            <person name="Evans P.S."/>
            <person name="Gregor J."/>
            <person name="Kirkpatrick H.A."/>
            <person name="Posfai G."/>
            <person name="Hackett J."/>
            <person name="Klink S."/>
            <person name="Boutin A."/>
            <person name="Shao Y."/>
            <person name="Miller L."/>
            <person name="Grotbeck E.J."/>
            <person name="Davis N.W."/>
            <person name="Lim A."/>
            <person name="Dimalanta E.T."/>
            <person name="Potamousis K."/>
            <person name="Apodaca J."/>
            <person name="Anantharaman T.S."/>
            <person name="Lin J."/>
            <person name="Yen G."/>
            <person name="Schwartz D.C."/>
            <person name="Welch R.A."/>
            <person name="Blattner F.R."/>
        </authorList>
    </citation>
    <scope>NUCLEOTIDE SEQUENCE [LARGE SCALE GENOMIC DNA]</scope>
    <source>
        <strain>O157:H7 / EDL933 / ATCC 700927 / EHEC</strain>
    </source>
</reference>
<reference key="2">
    <citation type="journal article" date="2001" name="DNA Res.">
        <title>Complete genome sequence of enterohemorrhagic Escherichia coli O157:H7 and genomic comparison with a laboratory strain K-12.</title>
        <authorList>
            <person name="Hayashi T."/>
            <person name="Makino K."/>
            <person name="Ohnishi M."/>
            <person name="Kurokawa K."/>
            <person name="Ishii K."/>
            <person name="Yokoyama K."/>
            <person name="Han C.-G."/>
            <person name="Ohtsubo E."/>
            <person name="Nakayama K."/>
            <person name="Murata T."/>
            <person name="Tanaka M."/>
            <person name="Tobe T."/>
            <person name="Iida T."/>
            <person name="Takami H."/>
            <person name="Honda T."/>
            <person name="Sasakawa C."/>
            <person name="Ogasawara N."/>
            <person name="Yasunaga T."/>
            <person name="Kuhara S."/>
            <person name="Shiba T."/>
            <person name="Hattori M."/>
            <person name="Shinagawa H."/>
        </authorList>
    </citation>
    <scope>NUCLEOTIDE SEQUENCE [LARGE SCALE GENOMIC DNA]</scope>
    <source>
        <strain>O157:H7 / Sakai / RIMD 0509952 / EHEC</strain>
    </source>
</reference>
<accession>P0A792</accession>
<accession>P31664</accession>
<accession>Q8KMY8</accession>